<proteinExistence type="inferred from homology"/>
<feature type="chain" id="PRO_0000258406" description="Phosphoribosylformylglycinamidine cyclo-ligase">
    <location>
        <begin position="1"/>
        <end position="348"/>
    </location>
</feature>
<name>PUR5_RUEST</name>
<dbReference type="EC" id="6.3.3.1" evidence="1"/>
<dbReference type="EMBL" id="CP000377">
    <property type="protein sequence ID" value="ABF64209.1"/>
    <property type="molecule type" value="Genomic_DNA"/>
</dbReference>
<dbReference type="RefSeq" id="WP_011538811.1">
    <property type="nucleotide sequence ID" value="NC_008044.1"/>
</dbReference>
<dbReference type="SMR" id="Q1GGK7"/>
<dbReference type="STRING" id="292414.TM1040_1476"/>
<dbReference type="KEGG" id="sit:TM1040_1476"/>
<dbReference type="eggNOG" id="COG0150">
    <property type="taxonomic scope" value="Bacteria"/>
</dbReference>
<dbReference type="HOGENOM" id="CLU_047116_0_0_5"/>
<dbReference type="OrthoDB" id="9777881at2"/>
<dbReference type="UniPathway" id="UPA00074">
    <property type="reaction ID" value="UER00129"/>
</dbReference>
<dbReference type="Proteomes" id="UP000000636">
    <property type="component" value="Chromosome"/>
</dbReference>
<dbReference type="GO" id="GO:0005829">
    <property type="term" value="C:cytosol"/>
    <property type="evidence" value="ECO:0007669"/>
    <property type="project" value="TreeGrafter"/>
</dbReference>
<dbReference type="GO" id="GO:0005524">
    <property type="term" value="F:ATP binding"/>
    <property type="evidence" value="ECO:0007669"/>
    <property type="project" value="UniProtKB-KW"/>
</dbReference>
<dbReference type="GO" id="GO:0004637">
    <property type="term" value="F:phosphoribosylamine-glycine ligase activity"/>
    <property type="evidence" value="ECO:0007669"/>
    <property type="project" value="TreeGrafter"/>
</dbReference>
<dbReference type="GO" id="GO:0004641">
    <property type="term" value="F:phosphoribosylformylglycinamidine cyclo-ligase activity"/>
    <property type="evidence" value="ECO:0007669"/>
    <property type="project" value="UniProtKB-UniRule"/>
</dbReference>
<dbReference type="GO" id="GO:0006189">
    <property type="term" value="P:'de novo' IMP biosynthetic process"/>
    <property type="evidence" value="ECO:0007669"/>
    <property type="project" value="UniProtKB-UniRule"/>
</dbReference>
<dbReference type="GO" id="GO:0046084">
    <property type="term" value="P:adenine biosynthetic process"/>
    <property type="evidence" value="ECO:0007669"/>
    <property type="project" value="TreeGrafter"/>
</dbReference>
<dbReference type="CDD" id="cd02196">
    <property type="entry name" value="PurM"/>
    <property type="match status" value="1"/>
</dbReference>
<dbReference type="FunFam" id="3.30.1330.10:FF:000001">
    <property type="entry name" value="Phosphoribosylformylglycinamidine cyclo-ligase"/>
    <property type="match status" value="1"/>
</dbReference>
<dbReference type="FunFam" id="3.90.650.10:FF:000011">
    <property type="entry name" value="Phosphoribosylformylglycinamidine cyclo-ligase"/>
    <property type="match status" value="1"/>
</dbReference>
<dbReference type="Gene3D" id="3.90.650.10">
    <property type="entry name" value="PurM-like C-terminal domain"/>
    <property type="match status" value="1"/>
</dbReference>
<dbReference type="Gene3D" id="3.30.1330.10">
    <property type="entry name" value="PurM-like, N-terminal domain"/>
    <property type="match status" value="1"/>
</dbReference>
<dbReference type="HAMAP" id="MF_00741">
    <property type="entry name" value="AIRS"/>
    <property type="match status" value="1"/>
</dbReference>
<dbReference type="InterPro" id="IPR010918">
    <property type="entry name" value="PurM-like_C_dom"/>
</dbReference>
<dbReference type="InterPro" id="IPR036676">
    <property type="entry name" value="PurM-like_C_sf"/>
</dbReference>
<dbReference type="InterPro" id="IPR016188">
    <property type="entry name" value="PurM-like_N"/>
</dbReference>
<dbReference type="InterPro" id="IPR036921">
    <property type="entry name" value="PurM-like_N_sf"/>
</dbReference>
<dbReference type="InterPro" id="IPR004733">
    <property type="entry name" value="PurM_cligase"/>
</dbReference>
<dbReference type="NCBIfam" id="TIGR00878">
    <property type="entry name" value="purM"/>
    <property type="match status" value="1"/>
</dbReference>
<dbReference type="PANTHER" id="PTHR10520:SF12">
    <property type="entry name" value="TRIFUNCTIONAL PURINE BIOSYNTHETIC PROTEIN ADENOSINE-3"/>
    <property type="match status" value="1"/>
</dbReference>
<dbReference type="PANTHER" id="PTHR10520">
    <property type="entry name" value="TRIFUNCTIONAL PURINE BIOSYNTHETIC PROTEIN ADENOSINE-3-RELATED"/>
    <property type="match status" value="1"/>
</dbReference>
<dbReference type="Pfam" id="PF00586">
    <property type="entry name" value="AIRS"/>
    <property type="match status" value="1"/>
</dbReference>
<dbReference type="Pfam" id="PF02769">
    <property type="entry name" value="AIRS_C"/>
    <property type="match status" value="1"/>
</dbReference>
<dbReference type="SUPFAM" id="SSF56042">
    <property type="entry name" value="PurM C-terminal domain-like"/>
    <property type="match status" value="1"/>
</dbReference>
<dbReference type="SUPFAM" id="SSF55326">
    <property type="entry name" value="PurM N-terminal domain-like"/>
    <property type="match status" value="1"/>
</dbReference>
<keyword id="KW-0067">ATP-binding</keyword>
<keyword id="KW-0963">Cytoplasm</keyword>
<keyword id="KW-0436">Ligase</keyword>
<keyword id="KW-0547">Nucleotide-binding</keyword>
<keyword id="KW-0658">Purine biosynthesis</keyword>
<keyword id="KW-1185">Reference proteome</keyword>
<comment type="catalytic activity">
    <reaction evidence="1">
        <text>2-formamido-N(1)-(5-O-phospho-beta-D-ribosyl)acetamidine + ATP = 5-amino-1-(5-phospho-beta-D-ribosyl)imidazole + ADP + phosphate + H(+)</text>
        <dbReference type="Rhea" id="RHEA:23032"/>
        <dbReference type="ChEBI" id="CHEBI:15378"/>
        <dbReference type="ChEBI" id="CHEBI:30616"/>
        <dbReference type="ChEBI" id="CHEBI:43474"/>
        <dbReference type="ChEBI" id="CHEBI:137981"/>
        <dbReference type="ChEBI" id="CHEBI:147287"/>
        <dbReference type="ChEBI" id="CHEBI:456216"/>
        <dbReference type="EC" id="6.3.3.1"/>
    </reaction>
</comment>
<comment type="pathway">
    <text evidence="1">Purine metabolism; IMP biosynthesis via de novo pathway; 5-amino-1-(5-phospho-D-ribosyl)imidazole from N(2)-formyl-N(1)-(5-phospho-D-ribosyl)glycinamide: step 2/2.</text>
</comment>
<comment type="subcellular location">
    <subcellularLocation>
        <location evidence="1">Cytoplasm</location>
    </subcellularLocation>
</comment>
<comment type="similarity">
    <text evidence="1">Belongs to the AIR synthase family.</text>
</comment>
<reference key="1">
    <citation type="submission" date="2006-05" db="EMBL/GenBank/DDBJ databases">
        <title>Complete sequence of chromosome of Silicibacter sp. TM1040.</title>
        <authorList>
            <consortium name="US DOE Joint Genome Institute"/>
            <person name="Copeland A."/>
            <person name="Lucas S."/>
            <person name="Lapidus A."/>
            <person name="Barry K."/>
            <person name="Detter J.C."/>
            <person name="Glavina del Rio T."/>
            <person name="Hammon N."/>
            <person name="Israni S."/>
            <person name="Dalin E."/>
            <person name="Tice H."/>
            <person name="Pitluck S."/>
            <person name="Brettin T."/>
            <person name="Bruce D."/>
            <person name="Han C."/>
            <person name="Tapia R."/>
            <person name="Goodwin L."/>
            <person name="Thompson L.S."/>
            <person name="Gilna P."/>
            <person name="Schmutz J."/>
            <person name="Larimer F."/>
            <person name="Land M."/>
            <person name="Hauser L."/>
            <person name="Kyrpides N."/>
            <person name="Kim E."/>
            <person name="Belas R."/>
            <person name="Moran M.A."/>
            <person name="Buchan A."/>
            <person name="Gonzalez J.M."/>
            <person name="Schell M.A."/>
            <person name="Sun F."/>
            <person name="Richardson P."/>
        </authorList>
    </citation>
    <scope>NUCLEOTIDE SEQUENCE [LARGE SCALE GENOMIC DNA]</scope>
    <source>
        <strain>TM1040</strain>
    </source>
</reference>
<organism>
    <name type="scientific">Ruegeria sp. (strain TM1040)</name>
    <name type="common">Silicibacter sp.</name>
    <dbReference type="NCBI Taxonomy" id="292414"/>
    <lineage>
        <taxon>Bacteria</taxon>
        <taxon>Pseudomonadati</taxon>
        <taxon>Pseudomonadota</taxon>
        <taxon>Alphaproteobacteria</taxon>
        <taxon>Rhodobacterales</taxon>
        <taxon>Roseobacteraceae</taxon>
        <taxon>Ruegeria</taxon>
    </lineage>
</organism>
<sequence length="348" mass="35929">MTSGKNGLTYADAGVDIDAGNELVDRIKPAAKRTNRPGVMSGLGGFGALFDLKAAGYEDPILVGATDGVGTKLRIAIDTGLVDGVGIDLVAMCVNDLVCQGAEPLFFLDYFATGKLETDVAARIIEGIAEGCVRSGCALIGGETAEMPGMYPKGDFDLAGFAVGAMERGTALPAGVSEGDVLLGLASDGVHSNGYSLVRQIVKYSGLGWDGDNPFGEGKLGEALLTPTRLYVKQSLAAVRAGGVNALAHITGGGLTENLPRVLPDDLGADIDLGAWELPGVFKWMAQTGGIEESEMLKTFNCGIGMILVVKADRADALTEVLEGEGETVARLGTVTRGEGIRYTGALL</sequence>
<evidence type="ECO:0000255" key="1">
    <source>
        <dbReference type="HAMAP-Rule" id="MF_00741"/>
    </source>
</evidence>
<gene>
    <name evidence="1" type="primary">purM</name>
    <name type="ordered locus">TM1040_1476</name>
</gene>
<protein>
    <recommendedName>
        <fullName evidence="1">Phosphoribosylformylglycinamidine cyclo-ligase</fullName>
        <ecNumber evidence="1">6.3.3.1</ecNumber>
    </recommendedName>
    <alternativeName>
        <fullName evidence="1">AIR synthase</fullName>
    </alternativeName>
    <alternativeName>
        <fullName evidence="1">AIRS</fullName>
    </alternativeName>
    <alternativeName>
        <fullName evidence="1">Phosphoribosyl-aminoimidazole synthetase</fullName>
    </alternativeName>
</protein>
<accession>Q1GGK7</accession>